<evidence type="ECO:0000255" key="1">
    <source>
        <dbReference type="HAMAP-Rule" id="MF_00531"/>
    </source>
</evidence>
<evidence type="ECO:0000305" key="2"/>
<dbReference type="EMBL" id="AE004092">
    <property type="protein sequence ID" value="AAK33186.1"/>
    <property type="molecule type" value="Genomic_DNA"/>
</dbReference>
<dbReference type="EMBL" id="CP000017">
    <property type="protein sequence ID" value="AAZ50667.1"/>
    <property type="molecule type" value="Genomic_DNA"/>
</dbReference>
<dbReference type="RefSeq" id="NP_268464.1">
    <property type="nucleotide sequence ID" value="NC_002737.2"/>
</dbReference>
<dbReference type="SMR" id="P66496"/>
<dbReference type="PaxDb" id="1314-HKU360_00081"/>
<dbReference type="KEGG" id="spy:SPy_0053"/>
<dbReference type="KEGG" id="spz:M5005_Spy0048"/>
<dbReference type="PATRIC" id="fig|160490.10.peg.48"/>
<dbReference type="HOGENOM" id="CLU_144911_0_1_9"/>
<dbReference type="OMA" id="KGPFVDP"/>
<dbReference type="PRO" id="PR:P66496"/>
<dbReference type="Proteomes" id="UP000000750">
    <property type="component" value="Chromosome"/>
</dbReference>
<dbReference type="GO" id="GO:0005737">
    <property type="term" value="C:cytoplasm"/>
    <property type="evidence" value="ECO:0007669"/>
    <property type="project" value="UniProtKB-ARBA"/>
</dbReference>
<dbReference type="GO" id="GO:0015935">
    <property type="term" value="C:small ribosomal subunit"/>
    <property type="evidence" value="ECO:0007669"/>
    <property type="project" value="InterPro"/>
</dbReference>
<dbReference type="GO" id="GO:0019843">
    <property type="term" value="F:rRNA binding"/>
    <property type="evidence" value="ECO:0007669"/>
    <property type="project" value="UniProtKB-UniRule"/>
</dbReference>
<dbReference type="GO" id="GO:0003735">
    <property type="term" value="F:structural constituent of ribosome"/>
    <property type="evidence" value="ECO:0007669"/>
    <property type="project" value="InterPro"/>
</dbReference>
<dbReference type="GO" id="GO:0000028">
    <property type="term" value="P:ribosomal small subunit assembly"/>
    <property type="evidence" value="ECO:0007669"/>
    <property type="project" value="TreeGrafter"/>
</dbReference>
<dbReference type="GO" id="GO:0006412">
    <property type="term" value="P:translation"/>
    <property type="evidence" value="ECO:0007669"/>
    <property type="project" value="UniProtKB-UniRule"/>
</dbReference>
<dbReference type="FunFam" id="3.30.860.10:FF:000001">
    <property type="entry name" value="30S ribosomal protein S19"/>
    <property type="match status" value="1"/>
</dbReference>
<dbReference type="Gene3D" id="3.30.860.10">
    <property type="entry name" value="30s Ribosomal Protein S19, Chain A"/>
    <property type="match status" value="1"/>
</dbReference>
<dbReference type="HAMAP" id="MF_00531">
    <property type="entry name" value="Ribosomal_uS19"/>
    <property type="match status" value="1"/>
</dbReference>
<dbReference type="InterPro" id="IPR002222">
    <property type="entry name" value="Ribosomal_uS19"/>
</dbReference>
<dbReference type="InterPro" id="IPR005732">
    <property type="entry name" value="Ribosomal_uS19_bac-type"/>
</dbReference>
<dbReference type="InterPro" id="IPR020934">
    <property type="entry name" value="Ribosomal_uS19_CS"/>
</dbReference>
<dbReference type="InterPro" id="IPR023575">
    <property type="entry name" value="Ribosomal_uS19_SF"/>
</dbReference>
<dbReference type="NCBIfam" id="TIGR01050">
    <property type="entry name" value="rpsS_bact"/>
    <property type="match status" value="1"/>
</dbReference>
<dbReference type="PANTHER" id="PTHR11880">
    <property type="entry name" value="RIBOSOMAL PROTEIN S19P FAMILY MEMBER"/>
    <property type="match status" value="1"/>
</dbReference>
<dbReference type="PANTHER" id="PTHR11880:SF8">
    <property type="entry name" value="SMALL RIBOSOMAL SUBUNIT PROTEIN US19M"/>
    <property type="match status" value="1"/>
</dbReference>
<dbReference type="Pfam" id="PF00203">
    <property type="entry name" value="Ribosomal_S19"/>
    <property type="match status" value="1"/>
</dbReference>
<dbReference type="PIRSF" id="PIRSF002144">
    <property type="entry name" value="Ribosomal_S19"/>
    <property type="match status" value="1"/>
</dbReference>
<dbReference type="PRINTS" id="PR00975">
    <property type="entry name" value="RIBOSOMALS19"/>
</dbReference>
<dbReference type="SUPFAM" id="SSF54570">
    <property type="entry name" value="Ribosomal protein S19"/>
    <property type="match status" value="1"/>
</dbReference>
<dbReference type="PROSITE" id="PS00323">
    <property type="entry name" value="RIBOSOMAL_S19"/>
    <property type="match status" value="1"/>
</dbReference>
<comment type="function">
    <text evidence="1">Protein S19 forms a complex with S13 that binds strongly to the 16S ribosomal RNA.</text>
</comment>
<comment type="similarity">
    <text evidence="1">Belongs to the universal ribosomal protein uS19 family.</text>
</comment>
<keyword id="KW-1185">Reference proteome</keyword>
<keyword id="KW-0687">Ribonucleoprotein</keyword>
<keyword id="KW-0689">Ribosomal protein</keyword>
<keyword id="KW-0694">RNA-binding</keyword>
<keyword id="KW-0699">rRNA-binding</keyword>
<organism>
    <name type="scientific">Streptococcus pyogenes serotype M1</name>
    <dbReference type="NCBI Taxonomy" id="301447"/>
    <lineage>
        <taxon>Bacteria</taxon>
        <taxon>Bacillati</taxon>
        <taxon>Bacillota</taxon>
        <taxon>Bacilli</taxon>
        <taxon>Lactobacillales</taxon>
        <taxon>Streptococcaceae</taxon>
        <taxon>Streptococcus</taxon>
    </lineage>
</organism>
<reference key="1">
    <citation type="journal article" date="2001" name="Proc. Natl. Acad. Sci. U.S.A.">
        <title>Complete genome sequence of an M1 strain of Streptococcus pyogenes.</title>
        <authorList>
            <person name="Ferretti J.J."/>
            <person name="McShan W.M."/>
            <person name="Ajdic D.J."/>
            <person name="Savic D.J."/>
            <person name="Savic G."/>
            <person name="Lyon K."/>
            <person name="Primeaux C."/>
            <person name="Sezate S."/>
            <person name="Suvorov A.N."/>
            <person name="Kenton S."/>
            <person name="Lai H.S."/>
            <person name="Lin S.P."/>
            <person name="Qian Y."/>
            <person name="Jia H.G."/>
            <person name="Najar F.Z."/>
            <person name="Ren Q."/>
            <person name="Zhu H."/>
            <person name="Song L."/>
            <person name="White J."/>
            <person name="Yuan X."/>
            <person name="Clifton S.W."/>
            <person name="Roe B.A."/>
            <person name="McLaughlin R.E."/>
        </authorList>
    </citation>
    <scope>NUCLEOTIDE SEQUENCE [LARGE SCALE GENOMIC DNA]</scope>
    <source>
        <strain>ATCC 700294 / SF370 / Serotype M1</strain>
    </source>
</reference>
<reference key="2">
    <citation type="journal article" date="2005" name="J. Infect. Dis.">
        <title>Evolutionary origin and emergence of a highly successful clone of serotype M1 group A Streptococcus involved multiple horizontal gene transfer events.</title>
        <authorList>
            <person name="Sumby P."/>
            <person name="Porcella S.F."/>
            <person name="Madrigal A.G."/>
            <person name="Barbian K.D."/>
            <person name="Virtaneva K."/>
            <person name="Ricklefs S.M."/>
            <person name="Sturdevant D.E."/>
            <person name="Graham M.R."/>
            <person name="Vuopio-Varkila J."/>
            <person name="Hoe N.P."/>
            <person name="Musser J.M."/>
        </authorList>
    </citation>
    <scope>NUCLEOTIDE SEQUENCE [LARGE SCALE GENOMIC DNA]</scope>
    <source>
        <strain>ATCC BAA-947 / MGAS5005 / Serotype M1</strain>
    </source>
</reference>
<protein>
    <recommendedName>
        <fullName evidence="1">Small ribosomal subunit protein uS19</fullName>
    </recommendedName>
    <alternativeName>
        <fullName evidence="2">30S ribosomal protein S19</fullName>
    </alternativeName>
</protein>
<accession>P66496</accession>
<accession>Q491Q1</accession>
<accession>Q9A1X0</accession>
<gene>
    <name evidence="1" type="primary">rpsS</name>
    <name type="ordered locus">SPy_0053</name>
    <name type="ordered locus">M5005_Spy0048</name>
</gene>
<feature type="chain" id="PRO_0000129914" description="Small ribosomal subunit protein uS19">
    <location>
        <begin position="1"/>
        <end position="92"/>
    </location>
</feature>
<proteinExistence type="inferred from homology"/>
<sequence>MGRSLKKGPFVDEHLMKKVEAQANDEKKKVIKTWSRRSTIFPSFIGYTIAVYDGRKHVPVYIQEDMVGHKLGEFAPTRTYKGHAADDKKTRR</sequence>
<name>RS19_STRP1</name>